<feature type="chain" id="PRO_0000107750" description="RNase adapter protein RapZ">
    <location>
        <begin position="1"/>
        <end position="284"/>
    </location>
</feature>
<feature type="region of interest" description="RNA-binding" evidence="1">
    <location>
        <begin position="266"/>
        <end position="284"/>
    </location>
</feature>
<feature type="binding site" evidence="1">
    <location>
        <begin position="8"/>
        <end position="15"/>
    </location>
    <ligand>
        <name>ATP</name>
        <dbReference type="ChEBI" id="CHEBI:30616"/>
    </ligand>
</feature>
<feature type="binding site" evidence="1">
    <location>
        <begin position="56"/>
        <end position="59"/>
    </location>
    <ligand>
        <name>GTP</name>
        <dbReference type="ChEBI" id="CHEBI:37565"/>
    </ligand>
</feature>
<name>RAPZ_SALPA</name>
<gene>
    <name evidence="1" type="primary">rapZ</name>
    <name type="ordered locus">SPA3190</name>
</gene>
<comment type="function">
    <text evidence="1">Modulates the synthesis of GlmS, by affecting the processing and stability of the regulatory small RNA GlmZ. When glucosamine-6-phosphate (GlcN6P) concentrations are high in the cell, RapZ binds GlmZ and targets it to cleavage by RNase E. Consequently, GlmZ is inactivated and unable to activate GlmS synthesis. Under low GlcN6P concentrations, RapZ is sequestered and inactivated by an other regulatory small RNA, GlmY, preventing GlmZ degradation and leading to synthesis of GlmS.</text>
</comment>
<comment type="subunit">
    <text evidence="1">Homotrimer.</text>
</comment>
<comment type="similarity">
    <text evidence="1">Belongs to the RapZ-like family. RapZ subfamily.</text>
</comment>
<accession>Q5PLD3</accession>
<dbReference type="EMBL" id="CP000026">
    <property type="protein sequence ID" value="AAV79015.1"/>
    <property type="molecule type" value="Genomic_DNA"/>
</dbReference>
<dbReference type="RefSeq" id="WP_000243749.1">
    <property type="nucleotide sequence ID" value="NC_006511.1"/>
</dbReference>
<dbReference type="SMR" id="Q5PLD3"/>
<dbReference type="KEGG" id="spt:SPA3190"/>
<dbReference type="HOGENOM" id="CLU_059558_1_1_6"/>
<dbReference type="Proteomes" id="UP000008185">
    <property type="component" value="Chromosome"/>
</dbReference>
<dbReference type="GO" id="GO:0005524">
    <property type="term" value="F:ATP binding"/>
    <property type="evidence" value="ECO:0007669"/>
    <property type="project" value="UniProtKB-UniRule"/>
</dbReference>
<dbReference type="GO" id="GO:0005525">
    <property type="term" value="F:GTP binding"/>
    <property type="evidence" value="ECO:0007669"/>
    <property type="project" value="UniProtKB-UniRule"/>
</dbReference>
<dbReference type="GO" id="GO:0003723">
    <property type="term" value="F:RNA binding"/>
    <property type="evidence" value="ECO:0007669"/>
    <property type="project" value="UniProtKB-KW"/>
</dbReference>
<dbReference type="Gene3D" id="3.40.50.300">
    <property type="entry name" value="P-loop containing nucleotide triphosphate hydrolases"/>
    <property type="match status" value="1"/>
</dbReference>
<dbReference type="HAMAP" id="MF_00636">
    <property type="entry name" value="RapZ_like"/>
    <property type="match status" value="1"/>
</dbReference>
<dbReference type="InterPro" id="IPR027417">
    <property type="entry name" value="P-loop_NTPase"/>
</dbReference>
<dbReference type="InterPro" id="IPR005337">
    <property type="entry name" value="RapZ-like"/>
</dbReference>
<dbReference type="InterPro" id="IPR053930">
    <property type="entry name" value="RapZ-like_N"/>
</dbReference>
<dbReference type="InterPro" id="IPR053931">
    <property type="entry name" value="RapZ_C"/>
</dbReference>
<dbReference type="NCBIfam" id="NF003828">
    <property type="entry name" value="PRK05416.1"/>
    <property type="match status" value="1"/>
</dbReference>
<dbReference type="PANTHER" id="PTHR30448">
    <property type="entry name" value="RNASE ADAPTER PROTEIN RAPZ"/>
    <property type="match status" value="1"/>
</dbReference>
<dbReference type="PANTHER" id="PTHR30448:SF0">
    <property type="entry name" value="RNASE ADAPTER PROTEIN RAPZ"/>
    <property type="match status" value="1"/>
</dbReference>
<dbReference type="Pfam" id="PF22740">
    <property type="entry name" value="PapZ_C"/>
    <property type="match status" value="1"/>
</dbReference>
<dbReference type="Pfam" id="PF03668">
    <property type="entry name" value="RapZ-like_N"/>
    <property type="match status" value="1"/>
</dbReference>
<dbReference type="PIRSF" id="PIRSF005052">
    <property type="entry name" value="P-loopkin"/>
    <property type="match status" value="1"/>
</dbReference>
<dbReference type="SUPFAM" id="SSF52540">
    <property type="entry name" value="P-loop containing nucleoside triphosphate hydrolases"/>
    <property type="match status" value="1"/>
</dbReference>
<proteinExistence type="inferred from homology"/>
<reference key="1">
    <citation type="journal article" date="2004" name="Nat. Genet.">
        <title>Comparison of genome degradation in Paratyphi A and Typhi, human-restricted serovars of Salmonella enterica that cause typhoid.</title>
        <authorList>
            <person name="McClelland M."/>
            <person name="Sanderson K.E."/>
            <person name="Clifton S.W."/>
            <person name="Latreille P."/>
            <person name="Porwollik S."/>
            <person name="Sabo A."/>
            <person name="Meyer R."/>
            <person name="Bieri T."/>
            <person name="Ozersky P."/>
            <person name="McLellan M."/>
            <person name="Harkins C.R."/>
            <person name="Wang C."/>
            <person name="Nguyen C."/>
            <person name="Berghoff A."/>
            <person name="Elliott G."/>
            <person name="Kohlberg S."/>
            <person name="Strong C."/>
            <person name="Du F."/>
            <person name="Carter J."/>
            <person name="Kremizki C."/>
            <person name="Layman D."/>
            <person name="Leonard S."/>
            <person name="Sun H."/>
            <person name="Fulton L."/>
            <person name="Nash W."/>
            <person name="Miner T."/>
            <person name="Minx P."/>
            <person name="Delehaunty K."/>
            <person name="Fronick C."/>
            <person name="Magrini V."/>
            <person name="Nhan M."/>
            <person name="Warren W."/>
            <person name="Florea L."/>
            <person name="Spieth J."/>
            <person name="Wilson R.K."/>
        </authorList>
    </citation>
    <scope>NUCLEOTIDE SEQUENCE [LARGE SCALE GENOMIC DNA]</scope>
    <source>
        <strain>ATCC 9150 / SARB42</strain>
    </source>
</reference>
<sequence>MVLMIVSGRSGSGKSVALRALEDMGFYCVDNLPVVLLPDLARTLADRQISAAVSIDVRNMPESPEIFEQAMNNLPGAFSPQLLFLDADRNTLIRRYSDTRRLHPLSSKNLSLESAIDKESDLLEPLRSRADLIVDTSEMSVHELAEMLRTRLLGKRERELTMVFESFGFKHGIPIDADYVFDVRFLPNPHWDPKLRPMTGLDKPVAAFLDRHTEVHNFIYQTRSYLELWLPMLETNNRSYLTVAIGCTGGKHRSVYIAEQLADYFRSRGKNVQSRHRTLEKRKT</sequence>
<organism>
    <name type="scientific">Salmonella paratyphi A (strain ATCC 9150 / SARB42)</name>
    <dbReference type="NCBI Taxonomy" id="295319"/>
    <lineage>
        <taxon>Bacteria</taxon>
        <taxon>Pseudomonadati</taxon>
        <taxon>Pseudomonadota</taxon>
        <taxon>Gammaproteobacteria</taxon>
        <taxon>Enterobacterales</taxon>
        <taxon>Enterobacteriaceae</taxon>
        <taxon>Salmonella</taxon>
    </lineage>
</organism>
<evidence type="ECO:0000255" key="1">
    <source>
        <dbReference type="HAMAP-Rule" id="MF_00636"/>
    </source>
</evidence>
<keyword id="KW-0067">ATP-binding</keyword>
<keyword id="KW-0342">GTP-binding</keyword>
<keyword id="KW-0547">Nucleotide-binding</keyword>
<keyword id="KW-0694">RNA-binding</keyword>
<protein>
    <recommendedName>
        <fullName evidence="1">RNase adapter protein RapZ</fullName>
    </recommendedName>
</protein>